<comment type="function">
    <text evidence="3">Odorant receptor.</text>
</comment>
<comment type="subcellular location">
    <subcellularLocation>
        <location>Cell membrane</location>
        <topology>Multi-pass membrane protein</topology>
    </subcellularLocation>
</comment>
<comment type="similarity">
    <text evidence="2">Belongs to the G-protein coupled receptor 1 family.</text>
</comment>
<comment type="caution">
    <text evidence="3">It is uncertain whether Met-1 or Met-12 is the initiator.</text>
</comment>
<comment type="online information" name="Human Olfactory Receptor Data Exploratorium (HORDE)">
    <link uri="http://genome.weizmann.ac.il/horde/card/index/symbol:OR11H1"/>
</comment>
<name>O11H1_HUMAN</name>
<reference key="1">
    <citation type="submission" date="2001-07" db="EMBL/GenBank/DDBJ databases">
        <title>Genome-wide discovery and analysis of human seven transmembrane helix receptor genes.</title>
        <authorList>
            <person name="Suwa M."/>
            <person name="Sato T."/>
            <person name="Okouchi I."/>
            <person name="Arita M."/>
            <person name="Futami K."/>
            <person name="Matsumoto S."/>
            <person name="Tsutsumi S."/>
            <person name="Aburatani H."/>
            <person name="Asai K."/>
            <person name="Akiyama Y."/>
        </authorList>
    </citation>
    <scope>NUCLEOTIDE SEQUENCE [GENOMIC DNA]</scope>
</reference>
<reference key="2">
    <citation type="journal article" date="1999" name="Nature">
        <title>The DNA sequence of human chromosome 22.</title>
        <authorList>
            <person name="Dunham I."/>
            <person name="Hunt A.R."/>
            <person name="Collins J.E."/>
            <person name="Bruskiewich R."/>
            <person name="Beare D.M."/>
            <person name="Clamp M."/>
            <person name="Smink L.J."/>
            <person name="Ainscough R."/>
            <person name="Almeida J.P."/>
            <person name="Babbage A.K."/>
            <person name="Bagguley C."/>
            <person name="Bailey J."/>
            <person name="Barlow K.F."/>
            <person name="Bates K.N."/>
            <person name="Beasley O.P."/>
            <person name="Bird C.P."/>
            <person name="Blakey S.E."/>
            <person name="Bridgeman A.M."/>
            <person name="Buck D."/>
            <person name="Burgess J."/>
            <person name="Burrill W.D."/>
            <person name="Burton J."/>
            <person name="Carder C."/>
            <person name="Carter N.P."/>
            <person name="Chen Y."/>
            <person name="Clark G."/>
            <person name="Clegg S.M."/>
            <person name="Cobley V.E."/>
            <person name="Cole C.G."/>
            <person name="Collier R.E."/>
            <person name="Connor R."/>
            <person name="Conroy D."/>
            <person name="Corby N.R."/>
            <person name="Coville G.J."/>
            <person name="Cox A.V."/>
            <person name="Davis J."/>
            <person name="Dawson E."/>
            <person name="Dhami P.D."/>
            <person name="Dockree C."/>
            <person name="Dodsworth S.J."/>
            <person name="Durbin R.M."/>
            <person name="Ellington A.G."/>
            <person name="Evans K.L."/>
            <person name="Fey J.M."/>
            <person name="Fleming K."/>
            <person name="French L."/>
            <person name="Garner A.A."/>
            <person name="Gilbert J.G.R."/>
            <person name="Goward M.E."/>
            <person name="Grafham D.V."/>
            <person name="Griffiths M.N.D."/>
            <person name="Hall C."/>
            <person name="Hall R.E."/>
            <person name="Hall-Tamlyn G."/>
            <person name="Heathcott R.W."/>
            <person name="Ho S."/>
            <person name="Holmes S."/>
            <person name="Hunt S.E."/>
            <person name="Jones M.C."/>
            <person name="Kershaw J."/>
            <person name="Kimberley A.M."/>
            <person name="King A."/>
            <person name="Laird G.K."/>
            <person name="Langford C.F."/>
            <person name="Leversha M.A."/>
            <person name="Lloyd C."/>
            <person name="Lloyd D.M."/>
            <person name="Martyn I.D."/>
            <person name="Mashreghi-Mohammadi M."/>
            <person name="Matthews L.H."/>
            <person name="Mccann O.T."/>
            <person name="Mcclay J."/>
            <person name="Mclaren S."/>
            <person name="McMurray A.A."/>
            <person name="Milne S.A."/>
            <person name="Mortimore B.J."/>
            <person name="Odell C.N."/>
            <person name="Pavitt R."/>
            <person name="Pearce A.V."/>
            <person name="Pearson D."/>
            <person name="Phillimore B.J.C.T."/>
            <person name="Phillips S.H."/>
            <person name="Plumb R.W."/>
            <person name="Ramsay H."/>
            <person name="Ramsey Y."/>
            <person name="Rogers L."/>
            <person name="Ross M.T."/>
            <person name="Scott C.E."/>
            <person name="Sehra H.K."/>
            <person name="Skuce C.D."/>
            <person name="Smalley S."/>
            <person name="Smith M.L."/>
            <person name="Soderlund C."/>
            <person name="Spragon L."/>
            <person name="Steward C.A."/>
            <person name="Sulston J.E."/>
            <person name="Swann R.M."/>
            <person name="Vaudin M."/>
            <person name="Wall M."/>
            <person name="Wallis J.M."/>
            <person name="Whiteley M.N."/>
            <person name="Willey D.L."/>
            <person name="Williams L."/>
            <person name="Williams S.A."/>
            <person name="Williamson H."/>
            <person name="Wilmer T.E."/>
            <person name="Wilming L."/>
            <person name="Wright C.L."/>
            <person name="Hubbard T."/>
            <person name="Bentley D.R."/>
            <person name="Beck S."/>
            <person name="Rogers J."/>
            <person name="Shimizu N."/>
            <person name="Minoshima S."/>
            <person name="Kawasaki K."/>
            <person name="Sasaki T."/>
            <person name="Asakawa S."/>
            <person name="Kudoh J."/>
            <person name="Shintani A."/>
            <person name="Shibuya K."/>
            <person name="Yoshizaki Y."/>
            <person name="Aoki N."/>
            <person name="Mitsuyama S."/>
            <person name="Roe B.A."/>
            <person name="Chen F."/>
            <person name="Chu L."/>
            <person name="Crabtree J."/>
            <person name="Deschamps S."/>
            <person name="Do A."/>
            <person name="Do T."/>
            <person name="Dorman A."/>
            <person name="Fang F."/>
            <person name="Fu Y."/>
            <person name="Hu P."/>
            <person name="Hua A."/>
            <person name="Kenton S."/>
            <person name="Lai H."/>
            <person name="Lao H.I."/>
            <person name="Lewis J."/>
            <person name="Lewis S."/>
            <person name="Lin S.-P."/>
            <person name="Loh P."/>
            <person name="Malaj E."/>
            <person name="Nguyen T."/>
            <person name="Pan H."/>
            <person name="Phan S."/>
            <person name="Qi S."/>
            <person name="Qian Y."/>
            <person name="Ray L."/>
            <person name="Ren Q."/>
            <person name="Shaull S."/>
            <person name="Sloan D."/>
            <person name="Song L."/>
            <person name="Wang Q."/>
            <person name="Wang Y."/>
            <person name="Wang Z."/>
            <person name="White J."/>
            <person name="Willingham D."/>
            <person name="Wu H."/>
            <person name="Yao Z."/>
            <person name="Zhan M."/>
            <person name="Zhang G."/>
            <person name="Chissoe S."/>
            <person name="Murray J."/>
            <person name="Miller N."/>
            <person name="Minx P."/>
            <person name="Fulton R."/>
            <person name="Johnson D."/>
            <person name="Bemis G."/>
            <person name="Bentley D."/>
            <person name="Bradshaw H."/>
            <person name="Bourne S."/>
            <person name="Cordes M."/>
            <person name="Du Z."/>
            <person name="Fulton L."/>
            <person name="Goela D."/>
            <person name="Graves T."/>
            <person name="Hawkins J."/>
            <person name="Hinds K."/>
            <person name="Kemp K."/>
            <person name="Latreille P."/>
            <person name="Layman D."/>
            <person name="Ozersky P."/>
            <person name="Rohlfing T."/>
            <person name="Scheet P."/>
            <person name="Walker C."/>
            <person name="Wamsley A."/>
            <person name="Wohldmann P."/>
            <person name="Pepin K."/>
            <person name="Nelson J."/>
            <person name="Korf I."/>
            <person name="Bedell J.A."/>
            <person name="Hillier L.W."/>
            <person name="Mardis E."/>
            <person name="Waterston R."/>
            <person name="Wilson R."/>
            <person name="Emanuel B.S."/>
            <person name="Shaikh T."/>
            <person name="Kurahashi H."/>
            <person name="Saitta S."/>
            <person name="Budarf M.L."/>
            <person name="McDermid H.E."/>
            <person name="Johnson A."/>
            <person name="Wong A.C.C."/>
            <person name="Morrow B.E."/>
            <person name="Edelmann L."/>
            <person name="Kim U.J."/>
            <person name="Shizuya H."/>
            <person name="Simon M.I."/>
            <person name="Dumanski J.P."/>
            <person name="Peyrard M."/>
            <person name="Kedra D."/>
            <person name="Seroussi E."/>
            <person name="Fransson I."/>
            <person name="Tapia I."/>
            <person name="Bruder C.E."/>
            <person name="O'Brien K.P."/>
            <person name="Wilkinson P."/>
            <person name="Bodenteich A."/>
            <person name="Hartman K."/>
            <person name="Hu X."/>
            <person name="Khan A.S."/>
            <person name="Lane L."/>
            <person name="Tilahun Y."/>
            <person name="Wright H."/>
        </authorList>
    </citation>
    <scope>NUCLEOTIDE SEQUENCE [LARGE SCALE GENOMIC DNA]</scope>
</reference>
<reference key="3">
    <citation type="journal article" date="2002" name="Genomics">
        <title>DEFOG: a practical scheme for deciphering families of genes.</title>
        <authorList>
            <person name="Fuchs T."/>
            <person name="Malecova B."/>
            <person name="Linhart C."/>
            <person name="Sharan R."/>
            <person name="Khen M."/>
            <person name="Herwig R."/>
            <person name="Shmulevich D."/>
            <person name="Elkon R."/>
            <person name="Steinfath M."/>
            <person name="O'Brien J.K."/>
            <person name="Radelof U."/>
            <person name="Lehrach H."/>
            <person name="Lancet D."/>
            <person name="Shamir R."/>
        </authorList>
    </citation>
    <scope>NUCLEOTIDE SEQUENCE [GENOMIC DNA] OF 83-299</scope>
</reference>
<reference key="4">
    <citation type="journal article" date="2004" name="Proc. Natl. Acad. Sci. U.S.A.">
        <title>The human olfactory receptor gene family.</title>
        <authorList>
            <person name="Malnic B."/>
            <person name="Godfrey P.A."/>
            <person name="Buck L.B."/>
        </authorList>
    </citation>
    <scope>IDENTIFICATION</scope>
</reference>
<reference key="5">
    <citation type="journal article" date="2004" name="Proc. Natl. Acad. Sci. U.S.A.">
        <authorList>
            <person name="Malnic B."/>
            <person name="Godfrey P.A."/>
            <person name="Buck L.B."/>
        </authorList>
    </citation>
    <scope>ERRATUM OF PUBMED:14983052</scope>
</reference>
<dbReference type="EMBL" id="AB065933">
    <property type="protein sequence ID" value="BAC06148.1"/>
    <property type="molecule type" value="Genomic_DNA"/>
</dbReference>
<dbReference type="EMBL" id="AP000534">
    <property type="status" value="NOT_ANNOTATED_CDS"/>
    <property type="molecule type" value="Genomic_DNA"/>
</dbReference>
<dbReference type="EMBL" id="AF399611">
    <property type="protein sequence ID" value="AAK95096.1"/>
    <property type="molecule type" value="Genomic_DNA"/>
</dbReference>
<dbReference type="EMBL" id="BK004492">
    <property type="protein sequence ID" value="DAA04890.1"/>
    <property type="molecule type" value="Genomic_DNA"/>
</dbReference>
<dbReference type="RefSeq" id="NP_001005239.1">
    <property type="nucleotide sequence ID" value="NM_001005239.1"/>
</dbReference>
<dbReference type="SMR" id="Q8NG94"/>
<dbReference type="FunCoup" id="Q8NG94">
    <property type="interactions" value="417"/>
</dbReference>
<dbReference type="STRING" id="9606.ENSP00000252835"/>
<dbReference type="GlyCosmos" id="Q8NG94">
    <property type="glycosylation" value="3 sites, No reported glycans"/>
</dbReference>
<dbReference type="GlyGen" id="Q8NG94">
    <property type="glycosylation" value="3 sites"/>
</dbReference>
<dbReference type="BioMuta" id="OR11H1"/>
<dbReference type="DMDM" id="212276498"/>
<dbReference type="PaxDb" id="9606-ENSP00000252835"/>
<dbReference type="DNASU" id="81061"/>
<dbReference type="GeneID" id="81061"/>
<dbReference type="KEGG" id="hsa:81061"/>
<dbReference type="UCSC" id="uc011agd.3">
    <property type="organism name" value="human"/>
</dbReference>
<dbReference type="AGR" id="HGNC:15404"/>
<dbReference type="CTD" id="81061"/>
<dbReference type="DisGeNET" id="81061"/>
<dbReference type="GeneCards" id="OR11H1"/>
<dbReference type="HGNC" id="HGNC:15404">
    <property type="gene designation" value="OR11H1"/>
</dbReference>
<dbReference type="neXtProt" id="NX_Q8NG94"/>
<dbReference type="PharmGKB" id="PA32013"/>
<dbReference type="eggNOG" id="ENOG502QVH7">
    <property type="taxonomic scope" value="Eukaryota"/>
</dbReference>
<dbReference type="HOGENOM" id="CLU_012526_1_0_1"/>
<dbReference type="InParanoid" id="Q8NG94"/>
<dbReference type="OrthoDB" id="6144223at2759"/>
<dbReference type="PAN-GO" id="Q8NG94">
    <property type="GO annotations" value="0 GO annotations based on evolutionary models"/>
</dbReference>
<dbReference type="PhylomeDB" id="Q8NG94"/>
<dbReference type="TreeFam" id="TF337213"/>
<dbReference type="PathwayCommons" id="Q8NG94"/>
<dbReference type="Reactome" id="R-HSA-9752946">
    <property type="pathway name" value="Expression and translocation of olfactory receptors"/>
</dbReference>
<dbReference type="BioGRID-ORCS" id="81061">
    <property type="hits" value="235 hits in 608 CRISPR screens"/>
</dbReference>
<dbReference type="GeneWiki" id="OR11H1"/>
<dbReference type="GenomeRNAi" id="81061"/>
<dbReference type="Pharos" id="Q8NG94">
    <property type="development level" value="Tdark"/>
</dbReference>
<dbReference type="PRO" id="PR:Q8NG94"/>
<dbReference type="Proteomes" id="UP000005640">
    <property type="component" value="Chromosome 22"/>
</dbReference>
<dbReference type="RNAct" id="Q8NG94">
    <property type="molecule type" value="protein"/>
</dbReference>
<dbReference type="GO" id="GO:0005886">
    <property type="term" value="C:plasma membrane"/>
    <property type="evidence" value="ECO:0007669"/>
    <property type="project" value="UniProtKB-SubCell"/>
</dbReference>
<dbReference type="GO" id="GO:0004930">
    <property type="term" value="F:G protein-coupled receptor activity"/>
    <property type="evidence" value="ECO:0007669"/>
    <property type="project" value="UniProtKB-KW"/>
</dbReference>
<dbReference type="GO" id="GO:0004984">
    <property type="term" value="F:olfactory receptor activity"/>
    <property type="evidence" value="ECO:0007669"/>
    <property type="project" value="InterPro"/>
</dbReference>
<dbReference type="CDD" id="cd15913">
    <property type="entry name" value="7tmA_OR11G-like"/>
    <property type="match status" value="1"/>
</dbReference>
<dbReference type="FunFam" id="1.20.1070.10:FF:000001">
    <property type="entry name" value="Olfactory receptor"/>
    <property type="match status" value="1"/>
</dbReference>
<dbReference type="Gene3D" id="1.20.1070.10">
    <property type="entry name" value="Rhodopsin 7-helix transmembrane proteins"/>
    <property type="match status" value="1"/>
</dbReference>
<dbReference type="InterPro" id="IPR000276">
    <property type="entry name" value="GPCR_Rhodpsn"/>
</dbReference>
<dbReference type="InterPro" id="IPR017452">
    <property type="entry name" value="GPCR_Rhodpsn_7TM"/>
</dbReference>
<dbReference type="InterPro" id="IPR000725">
    <property type="entry name" value="Olfact_rcpt"/>
</dbReference>
<dbReference type="InterPro" id="IPR050939">
    <property type="entry name" value="Olfactory_GPCR1"/>
</dbReference>
<dbReference type="PANTHER" id="PTHR24242">
    <property type="entry name" value="G-PROTEIN COUPLED RECEPTOR"/>
    <property type="match status" value="1"/>
</dbReference>
<dbReference type="PANTHER" id="PTHR24242:SF201">
    <property type="entry name" value="OLFACTORY RECEPTOR 11H1-RELATED"/>
    <property type="match status" value="1"/>
</dbReference>
<dbReference type="Pfam" id="PF13853">
    <property type="entry name" value="7tm_4"/>
    <property type="match status" value="1"/>
</dbReference>
<dbReference type="PRINTS" id="PR00237">
    <property type="entry name" value="GPCRRHODOPSN"/>
</dbReference>
<dbReference type="PRINTS" id="PR00245">
    <property type="entry name" value="OLFACTORYR"/>
</dbReference>
<dbReference type="SUPFAM" id="SSF81321">
    <property type="entry name" value="Family A G protein-coupled receptor-like"/>
    <property type="match status" value="1"/>
</dbReference>
<dbReference type="PROSITE" id="PS50262">
    <property type="entry name" value="G_PROTEIN_RECEP_F1_2"/>
    <property type="match status" value="1"/>
</dbReference>
<proteinExistence type="inferred from homology"/>
<protein>
    <recommendedName>
        <fullName>Olfactory receptor 11H1</fullName>
    </recommendedName>
    <alternativeName>
        <fullName>Olfactory receptor OR22-1</fullName>
    </alternativeName>
</protein>
<sequence length="326" mass="36578">MCPLTLQVTGLMNVSEPNSSFAFVNEFILQGFSCEWTIQIFLFSLFTTTYALTITGNGAIAFVLWCDRRLHTPMYMFLGNFSFLEIWYVSSTVPKMLVNFLSEKKNISFAGCFLQFYFFFSLGTSECLLLTVMAFDQYLAICRPLLYPNIMTGHLYAKLVILCWVCGFLWFLIPIVLISQMPFCGPNIIDHVVCDPGPRFALDCVSAPRIQLFCYTLSSLVIFGNFLFIIGSYTLVLKAMLGMPSSTGRHKAFSTCGSHLAVVSLCYSSLMVMYVSPGLGHSTGMQKIETLFYAMVTPLFNPLIYSLQNKEIKAALRKVLGSSNII</sequence>
<gene>
    <name type="primary">OR11H1</name>
</gene>
<evidence type="ECO:0000255" key="1"/>
<evidence type="ECO:0000255" key="2">
    <source>
        <dbReference type="PROSITE-ProRule" id="PRU00521"/>
    </source>
</evidence>
<evidence type="ECO:0000305" key="3"/>
<feature type="chain" id="PRO_0000150724" description="Olfactory receptor 11H1">
    <location>
        <begin position="1"/>
        <end position="326"/>
    </location>
</feature>
<feature type="topological domain" description="Extracellular" evidence="1">
    <location>
        <begin position="1"/>
        <end position="44"/>
    </location>
</feature>
<feature type="transmembrane region" description="Helical; Name=1" evidence="1">
    <location>
        <begin position="45"/>
        <end position="65"/>
    </location>
</feature>
<feature type="topological domain" description="Cytoplasmic" evidence="1">
    <location>
        <begin position="66"/>
        <end position="72"/>
    </location>
</feature>
<feature type="transmembrane region" description="Helical; Name=2" evidence="1">
    <location>
        <begin position="73"/>
        <end position="93"/>
    </location>
</feature>
<feature type="topological domain" description="Extracellular" evidence="1">
    <location>
        <begin position="94"/>
        <end position="112"/>
    </location>
</feature>
<feature type="transmembrane region" description="Helical; Name=3" evidence="1">
    <location>
        <begin position="113"/>
        <end position="133"/>
    </location>
</feature>
<feature type="topological domain" description="Cytoplasmic" evidence="1">
    <location>
        <begin position="134"/>
        <end position="158"/>
    </location>
</feature>
<feature type="transmembrane region" description="Helical; Name=4" evidence="1">
    <location>
        <begin position="159"/>
        <end position="179"/>
    </location>
</feature>
<feature type="topological domain" description="Extracellular" evidence="1">
    <location>
        <begin position="180"/>
        <end position="216"/>
    </location>
</feature>
<feature type="transmembrane region" description="Helical; Name=5" evidence="1">
    <location>
        <begin position="217"/>
        <end position="237"/>
    </location>
</feature>
<feature type="topological domain" description="Cytoplasmic" evidence="1">
    <location>
        <begin position="238"/>
        <end position="259"/>
    </location>
</feature>
<feature type="transmembrane region" description="Helical; Name=6" evidence="1">
    <location>
        <begin position="260"/>
        <end position="280"/>
    </location>
</feature>
<feature type="topological domain" description="Extracellular" evidence="1">
    <location>
        <begin position="281"/>
        <end position="287"/>
    </location>
</feature>
<feature type="transmembrane region" description="Helical; Name=7" evidence="1">
    <location>
        <begin position="288"/>
        <end position="308"/>
    </location>
</feature>
<feature type="topological domain" description="Cytoplasmic" evidence="1">
    <location>
        <begin position="309"/>
        <end position="326"/>
    </location>
</feature>
<feature type="glycosylation site" description="N-linked (GlcNAc...) asparagine" evidence="1">
    <location>
        <position position="13"/>
    </location>
</feature>
<feature type="glycosylation site" description="N-linked (GlcNAc...) asparagine" evidence="1">
    <location>
        <position position="18"/>
    </location>
</feature>
<feature type="glycosylation site" description="N-linked (GlcNAc...) asparagine" evidence="1">
    <location>
        <position position="106"/>
    </location>
</feature>
<feature type="disulfide bond" evidence="2">
    <location>
        <begin position="112"/>
        <end position="194"/>
    </location>
</feature>
<keyword id="KW-1003">Cell membrane</keyword>
<keyword id="KW-1015">Disulfide bond</keyword>
<keyword id="KW-0297">G-protein coupled receptor</keyword>
<keyword id="KW-0325">Glycoprotein</keyword>
<keyword id="KW-0472">Membrane</keyword>
<keyword id="KW-0552">Olfaction</keyword>
<keyword id="KW-0675">Receptor</keyword>
<keyword id="KW-1185">Reference proteome</keyword>
<keyword id="KW-0716">Sensory transduction</keyword>
<keyword id="KW-0807">Transducer</keyword>
<keyword id="KW-0812">Transmembrane</keyword>
<keyword id="KW-1133">Transmembrane helix</keyword>
<accession>Q8NG94</accession>
<accession>Q6IEX0</accession>
<accession>Q96R32</accession>
<organism>
    <name type="scientific">Homo sapiens</name>
    <name type="common">Human</name>
    <dbReference type="NCBI Taxonomy" id="9606"/>
    <lineage>
        <taxon>Eukaryota</taxon>
        <taxon>Metazoa</taxon>
        <taxon>Chordata</taxon>
        <taxon>Craniata</taxon>
        <taxon>Vertebrata</taxon>
        <taxon>Euteleostomi</taxon>
        <taxon>Mammalia</taxon>
        <taxon>Eutheria</taxon>
        <taxon>Euarchontoglires</taxon>
        <taxon>Primates</taxon>
        <taxon>Haplorrhini</taxon>
        <taxon>Catarrhini</taxon>
        <taxon>Hominidae</taxon>
        <taxon>Homo</taxon>
    </lineage>
</organism>